<feature type="chain" id="PRO_1000196621" description="DNA-directed RNA polymerase subunit alpha">
    <location>
        <begin position="1"/>
        <end position="335"/>
    </location>
</feature>
<feature type="region of interest" description="Alpha N-terminal domain (alpha-NTD)" evidence="1">
    <location>
        <begin position="1"/>
        <end position="233"/>
    </location>
</feature>
<feature type="region of interest" description="Alpha C-terminal domain (alpha-CTD)" evidence="1">
    <location>
        <begin position="247"/>
        <end position="335"/>
    </location>
</feature>
<organism>
    <name type="scientific">Acinetobacter baumannii (strain AB0057)</name>
    <dbReference type="NCBI Taxonomy" id="480119"/>
    <lineage>
        <taxon>Bacteria</taxon>
        <taxon>Pseudomonadati</taxon>
        <taxon>Pseudomonadota</taxon>
        <taxon>Gammaproteobacteria</taxon>
        <taxon>Moraxellales</taxon>
        <taxon>Moraxellaceae</taxon>
        <taxon>Acinetobacter</taxon>
        <taxon>Acinetobacter calcoaceticus/baumannii complex</taxon>
    </lineage>
</organism>
<proteinExistence type="inferred from homology"/>
<protein>
    <recommendedName>
        <fullName evidence="1">DNA-directed RNA polymerase subunit alpha</fullName>
        <shortName evidence="1">RNAP subunit alpha</shortName>
        <ecNumber evidence="1">2.7.7.6</ecNumber>
    </recommendedName>
    <alternativeName>
        <fullName evidence="1">RNA polymerase subunit alpha</fullName>
    </alternativeName>
    <alternativeName>
        <fullName evidence="1">Transcriptase subunit alpha</fullName>
    </alternativeName>
</protein>
<comment type="function">
    <text evidence="1">DNA-dependent RNA polymerase catalyzes the transcription of DNA into RNA using the four ribonucleoside triphosphates as substrates.</text>
</comment>
<comment type="catalytic activity">
    <reaction evidence="1">
        <text>RNA(n) + a ribonucleoside 5'-triphosphate = RNA(n+1) + diphosphate</text>
        <dbReference type="Rhea" id="RHEA:21248"/>
        <dbReference type="Rhea" id="RHEA-COMP:14527"/>
        <dbReference type="Rhea" id="RHEA-COMP:17342"/>
        <dbReference type="ChEBI" id="CHEBI:33019"/>
        <dbReference type="ChEBI" id="CHEBI:61557"/>
        <dbReference type="ChEBI" id="CHEBI:140395"/>
        <dbReference type="EC" id="2.7.7.6"/>
    </reaction>
</comment>
<comment type="subunit">
    <text evidence="1">Homodimer. The RNAP catalytic core consists of 2 alpha, 1 beta, 1 beta' and 1 omega subunit. When a sigma factor is associated with the core the holoenzyme is formed, which can initiate transcription.</text>
</comment>
<comment type="domain">
    <text evidence="1">The N-terminal domain is essential for RNAP assembly and basal transcription, whereas the C-terminal domain is involved in interaction with transcriptional regulators and with upstream promoter elements.</text>
</comment>
<comment type="similarity">
    <text evidence="1">Belongs to the RNA polymerase alpha chain family.</text>
</comment>
<dbReference type="EC" id="2.7.7.6" evidence="1"/>
<dbReference type="EMBL" id="CP001182">
    <property type="protein sequence ID" value="ACJ42872.1"/>
    <property type="molecule type" value="Genomic_DNA"/>
</dbReference>
<dbReference type="RefSeq" id="WP_000198631.1">
    <property type="nucleotide sequence ID" value="NC_011586.2"/>
</dbReference>
<dbReference type="SMR" id="B7IA14"/>
<dbReference type="GeneID" id="92895292"/>
<dbReference type="KEGG" id="abn:AB57_3505"/>
<dbReference type="HOGENOM" id="CLU_053084_0_0_6"/>
<dbReference type="Proteomes" id="UP000007094">
    <property type="component" value="Chromosome"/>
</dbReference>
<dbReference type="GO" id="GO:0005737">
    <property type="term" value="C:cytoplasm"/>
    <property type="evidence" value="ECO:0007669"/>
    <property type="project" value="UniProtKB-ARBA"/>
</dbReference>
<dbReference type="GO" id="GO:0000428">
    <property type="term" value="C:DNA-directed RNA polymerase complex"/>
    <property type="evidence" value="ECO:0007669"/>
    <property type="project" value="UniProtKB-KW"/>
</dbReference>
<dbReference type="GO" id="GO:0003677">
    <property type="term" value="F:DNA binding"/>
    <property type="evidence" value="ECO:0007669"/>
    <property type="project" value="UniProtKB-UniRule"/>
</dbReference>
<dbReference type="GO" id="GO:0003899">
    <property type="term" value="F:DNA-directed RNA polymerase activity"/>
    <property type="evidence" value="ECO:0007669"/>
    <property type="project" value="UniProtKB-UniRule"/>
</dbReference>
<dbReference type="GO" id="GO:0046983">
    <property type="term" value="F:protein dimerization activity"/>
    <property type="evidence" value="ECO:0007669"/>
    <property type="project" value="InterPro"/>
</dbReference>
<dbReference type="GO" id="GO:0006351">
    <property type="term" value="P:DNA-templated transcription"/>
    <property type="evidence" value="ECO:0007669"/>
    <property type="project" value="UniProtKB-UniRule"/>
</dbReference>
<dbReference type="CDD" id="cd06928">
    <property type="entry name" value="RNAP_alpha_NTD"/>
    <property type="match status" value="1"/>
</dbReference>
<dbReference type="FunFam" id="1.10.150.20:FF:000001">
    <property type="entry name" value="DNA-directed RNA polymerase subunit alpha"/>
    <property type="match status" value="1"/>
</dbReference>
<dbReference type="FunFam" id="2.170.120.12:FF:000001">
    <property type="entry name" value="DNA-directed RNA polymerase subunit alpha"/>
    <property type="match status" value="1"/>
</dbReference>
<dbReference type="Gene3D" id="1.10.150.20">
    <property type="entry name" value="5' to 3' exonuclease, C-terminal subdomain"/>
    <property type="match status" value="1"/>
</dbReference>
<dbReference type="Gene3D" id="2.170.120.12">
    <property type="entry name" value="DNA-directed RNA polymerase, insert domain"/>
    <property type="match status" value="1"/>
</dbReference>
<dbReference type="Gene3D" id="3.30.1360.10">
    <property type="entry name" value="RNA polymerase, RBP11-like subunit"/>
    <property type="match status" value="1"/>
</dbReference>
<dbReference type="HAMAP" id="MF_00059">
    <property type="entry name" value="RNApol_bact_RpoA"/>
    <property type="match status" value="1"/>
</dbReference>
<dbReference type="InterPro" id="IPR011262">
    <property type="entry name" value="DNA-dir_RNA_pol_insert"/>
</dbReference>
<dbReference type="InterPro" id="IPR011263">
    <property type="entry name" value="DNA-dir_RNA_pol_RpoA/D/Rpb3"/>
</dbReference>
<dbReference type="InterPro" id="IPR011773">
    <property type="entry name" value="DNA-dir_RpoA"/>
</dbReference>
<dbReference type="InterPro" id="IPR036603">
    <property type="entry name" value="RBP11-like"/>
</dbReference>
<dbReference type="InterPro" id="IPR011260">
    <property type="entry name" value="RNAP_asu_C"/>
</dbReference>
<dbReference type="InterPro" id="IPR036643">
    <property type="entry name" value="RNApol_insert_sf"/>
</dbReference>
<dbReference type="NCBIfam" id="NF003513">
    <property type="entry name" value="PRK05182.1-2"/>
    <property type="match status" value="1"/>
</dbReference>
<dbReference type="NCBIfam" id="NF003519">
    <property type="entry name" value="PRK05182.2-5"/>
    <property type="match status" value="1"/>
</dbReference>
<dbReference type="NCBIfam" id="TIGR02027">
    <property type="entry name" value="rpoA"/>
    <property type="match status" value="1"/>
</dbReference>
<dbReference type="Pfam" id="PF01000">
    <property type="entry name" value="RNA_pol_A_bac"/>
    <property type="match status" value="1"/>
</dbReference>
<dbReference type="Pfam" id="PF03118">
    <property type="entry name" value="RNA_pol_A_CTD"/>
    <property type="match status" value="1"/>
</dbReference>
<dbReference type="Pfam" id="PF01193">
    <property type="entry name" value="RNA_pol_L"/>
    <property type="match status" value="1"/>
</dbReference>
<dbReference type="SMART" id="SM00662">
    <property type="entry name" value="RPOLD"/>
    <property type="match status" value="1"/>
</dbReference>
<dbReference type="SUPFAM" id="SSF47789">
    <property type="entry name" value="C-terminal domain of RNA polymerase alpha subunit"/>
    <property type="match status" value="1"/>
</dbReference>
<dbReference type="SUPFAM" id="SSF56553">
    <property type="entry name" value="Insert subdomain of RNA polymerase alpha subunit"/>
    <property type="match status" value="1"/>
</dbReference>
<dbReference type="SUPFAM" id="SSF55257">
    <property type="entry name" value="RBP11-like subunits of RNA polymerase"/>
    <property type="match status" value="1"/>
</dbReference>
<gene>
    <name evidence="1" type="primary">rpoA</name>
    <name type="ordered locus">AB57_3505</name>
</gene>
<keyword id="KW-0240">DNA-directed RNA polymerase</keyword>
<keyword id="KW-0548">Nucleotidyltransferase</keyword>
<keyword id="KW-0804">Transcription</keyword>
<keyword id="KW-0808">Transferase</keyword>
<sequence length="335" mass="37260">MTRTANEFLTPQAIKVEAVSGTSAKVILEPLERGFGHTLGNALRRILLSSLPGAAVVEVEIEGVEHEYSTLEGLQQDIVELLLNLKGLSIKLFDQNEAYLTLEKQGPGDITAADLRLPHNVEVVNPEHLIGTLSATGSLKMRLKVSQGRGYETSDSRFPEGETRPVGRLQLDASYSPIKRVSYTVENARVEQRTDLDKLVIDLETNGTVDPEEAIRKAATILQQQIAIFVDLQKDQTPVAQEPREEVDPILLRPVDDLELTVRSANCLKAENIYYIGDLVQRTEVELLKTPNLGKKSLTEIKDVLASKGLQLGMRLENWPPASLRMDDRFAYRSR</sequence>
<name>RPOA_ACIB5</name>
<evidence type="ECO:0000255" key="1">
    <source>
        <dbReference type="HAMAP-Rule" id="MF_00059"/>
    </source>
</evidence>
<reference key="1">
    <citation type="journal article" date="2008" name="J. Bacteriol.">
        <title>Comparative genome sequence analysis of multidrug-resistant Acinetobacter baumannii.</title>
        <authorList>
            <person name="Adams M.D."/>
            <person name="Goglin K."/>
            <person name="Molyneaux N."/>
            <person name="Hujer K.M."/>
            <person name="Lavender H."/>
            <person name="Jamison J.J."/>
            <person name="MacDonald I.J."/>
            <person name="Martin K.M."/>
            <person name="Russo T."/>
            <person name="Campagnari A.A."/>
            <person name="Hujer A.M."/>
            <person name="Bonomo R.A."/>
            <person name="Gill S.R."/>
        </authorList>
    </citation>
    <scope>NUCLEOTIDE SEQUENCE [LARGE SCALE GENOMIC DNA]</scope>
    <source>
        <strain>AB0057</strain>
    </source>
</reference>
<accession>B7IA14</accession>